<feature type="chain" id="PRO_0000106221" description="Valine--tRNA ligase">
    <location>
        <begin position="1"/>
        <end position="940"/>
    </location>
</feature>
<feature type="coiled-coil region" evidence="1">
    <location>
        <begin position="873"/>
        <end position="905"/>
    </location>
</feature>
<feature type="short sequence motif" description="'HIGH' region">
    <location>
        <begin position="47"/>
        <end position="57"/>
    </location>
</feature>
<feature type="short sequence motif" description="'KMSKS' region">
    <location>
        <begin position="564"/>
        <end position="568"/>
    </location>
</feature>
<feature type="binding site" evidence="1">
    <location>
        <position position="567"/>
    </location>
    <ligand>
        <name>ATP</name>
        <dbReference type="ChEBI" id="CHEBI:30616"/>
    </ligand>
</feature>
<proteinExistence type="inferred from homology"/>
<reference key="1">
    <citation type="journal article" date="1999" name="Nat. Genet.">
        <title>Comparative genomes of Chlamydia pneumoniae and C. trachomatis.</title>
        <authorList>
            <person name="Kalman S."/>
            <person name="Mitchell W.P."/>
            <person name="Marathe R."/>
            <person name="Lammel C.J."/>
            <person name="Fan J."/>
            <person name="Hyman R.W."/>
            <person name="Olinger L."/>
            <person name="Grimwood J."/>
            <person name="Davis R.W."/>
            <person name="Stephens R.S."/>
        </authorList>
    </citation>
    <scope>NUCLEOTIDE SEQUENCE [LARGE SCALE GENOMIC DNA]</scope>
    <source>
        <strain>CWL029</strain>
    </source>
</reference>
<reference key="2">
    <citation type="journal article" date="2000" name="Nucleic Acids Res.">
        <title>Genome sequences of Chlamydia trachomatis MoPn and Chlamydia pneumoniae AR39.</title>
        <authorList>
            <person name="Read T.D."/>
            <person name="Brunham R.C."/>
            <person name="Shen C."/>
            <person name="Gill S.R."/>
            <person name="Heidelberg J.F."/>
            <person name="White O."/>
            <person name="Hickey E.K."/>
            <person name="Peterson J.D."/>
            <person name="Utterback T.R."/>
            <person name="Berry K.J."/>
            <person name="Bass S."/>
            <person name="Linher K.D."/>
            <person name="Weidman J.F."/>
            <person name="Khouri H.M."/>
            <person name="Craven B."/>
            <person name="Bowman C."/>
            <person name="Dodson R.J."/>
            <person name="Gwinn M.L."/>
            <person name="Nelson W.C."/>
            <person name="DeBoy R.T."/>
            <person name="Kolonay J.F."/>
            <person name="McClarty G."/>
            <person name="Salzberg S.L."/>
            <person name="Eisen J.A."/>
            <person name="Fraser C.M."/>
        </authorList>
    </citation>
    <scope>NUCLEOTIDE SEQUENCE [LARGE SCALE GENOMIC DNA]</scope>
    <source>
        <strain>AR39</strain>
    </source>
</reference>
<reference key="3">
    <citation type="journal article" date="2000" name="Nucleic Acids Res.">
        <title>Comparison of whole genome sequences of Chlamydia pneumoniae J138 from Japan and CWL029 from USA.</title>
        <authorList>
            <person name="Shirai M."/>
            <person name="Hirakawa H."/>
            <person name="Kimoto M."/>
            <person name="Tabuchi M."/>
            <person name="Kishi F."/>
            <person name="Ouchi K."/>
            <person name="Shiba T."/>
            <person name="Ishii K."/>
            <person name="Hattori M."/>
            <person name="Kuhara S."/>
            <person name="Nakazawa T."/>
        </authorList>
    </citation>
    <scope>NUCLEOTIDE SEQUENCE [LARGE SCALE GENOMIC DNA]</scope>
    <source>
        <strain>J138</strain>
    </source>
</reference>
<reference key="4">
    <citation type="submission" date="2002-05" db="EMBL/GenBank/DDBJ databases">
        <title>The genome sequence of Chlamydia pneumoniae TW183 and comparison with other Chlamydia strains based on whole genome sequence analysis.</title>
        <authorList>
            <person name="Geng M.M."/>
            <person name="Schuhmacher A."/>
            <person name="Muehldorfer I."/>
            <person name="Bensch K.W."/>
            <person name="Schaefer K.P."/>
            <person name="Schneider S."/>
            <person name="Pohl T."/>
            <person name="Essig A."/>
            <person name="Marre R."/>
            <person name="Melchers K."/>
        </authorList>
    </citation>
    <scope>NUCLEOTIDE SEQUENCE [LARGE SCALE GENOMIC DNA]</scope>
    <source>
        <strain>TW-183</strain>
    </source>
</reference>
<keyword id="KW-0030">Aminoacyl-tRNA synthetase</keyword>
<keyword id="KW-0067">ATP-binding</keyword>
<keyword id="KW-0175">Coiled coil</keyword>
<keyword id="KW-0963">Cytoplasm</keyword>
<keyword id="KW-0436">Ligase</keyword>
<keyword id="KW-0547">Nucleotide-binding</keyword>
<keyword id="KW-0648">Protein biosynthesis</keyword>
<sequence>MTTEDFPKAYNFQDTEPELYVFWEKNGMFKAEASSDKPPYSVIMPPPNVTGVLHMGHALVNTLQDVLVRYKRMSGFEVCWIPGTDHAGIATQAVVERHLQASEGKRRTDYSREDFLKHIWAWKEKSEKVVLSQLRQLGCSCDWDRKRFTMEPLANRAVKKAFKTLFENGYIYRGYYLVNWDPVLQTALADDEVEYEEKDGWLYYIRYRMVGSQESIVVATTRPETSLGDTGIAVSPNDERYASWIGASVEVPFVNRQIPIIGDASVDPTFGTGAVKVTPAHDKDDYLMGTNHHLPMINILTPSGGINENGGPFAGMAKEKAREEILIALEEQGLFVRKEPYKLRVGVSYRSGAVIEPYLSKQWFVSVSEFRGALREFVESQDIKIFPKDFVKNYLSWVNHLRDWCISRQLWWGHRIPVWYHKNDDERVLCYDGEGIPEEVAQDPDSWYQDPDVLDTWFSSGLWPLTCLGWPDENSPDLKKFYPTALLVTGHDILFFWVTRMVLLCSSMSGEKPFSEVFLHGLIFGKSYKRYNDFGEWSYISGKEKLAYDMGEALPDGVVAKWEKLSKSKGNVIDPLEMIATYGTDAVRLTLCSCANRGEQIDLDYRLFEEYKHFANKVWNGARFIFGHISDLQGKDLLAGIDEDSLGLEDFYILDGFNQLIHQLEEAYATYAFDKVATLAYEFFRNDLCSTYIEIIKPTLFGKQGNEASQSTKRTLLAVLLINVLGVLHPVAPFITESLFLRIQDTLGALPEGDGDAFTGHALRMLRSRACMEAPYPKAFDVKIPQDLRESFTLAQRLVYTIRNIRGEMQLDPRLHLKAFVVCSDTTEIQSCIPILQALGGLESIQLLDKEPEKGLYSFGVVDTIRLGIFVPEEHLLKEKGRLEKERVRLERAVENLERLLGDESFCQKANPNLVVAKQEALKNNRIELQGILDKLASFA</sequence>
<evidence type="ECO:0000255" key="1">
    <source>
        <dbReference type="HAMAP-Rule" id="MF_02004"/>
    </source>
</evidence>
<accession>Q9Z987</accession>
<accession>Q9JQA5</accession>
<name>SYV_CHLPN</name>
<protein>
    <recommendedName>
        <fullName evidence="1">Valine--tRNA ligase</fullName>
        <ecNumber evidence="1">6.1.1.9</ecNumber>
    </recommendedName>
    <alternativeName>
        <fullName evidence="1">Valyl-tRNA synthetase</fullName>
        <shortName evidence="1">ValRS</shortName>
    </alternativeName>
</protein>
<comment type="function">
    <text evidence="1">Catalyzes the attachment of valine to tRNA(Val). As ValRS can inadvertently accommodate and process structurally similar amino acids such as threonine, to avoid such errors, it has a 'posttransfer' editing activity that hydrolyzes mischarged Thr-tRNA(Val) in a tRNA-dependent manner.</text>
</comment>
<comment type="catalytic activity">
    <reaction evidence="1">
        <text>tRNA(Val) + L-valine + ATP = L-valyl-tRNA(Val) + AMP + diphosphate</text>
        <dbReference type="Rhea" id="RHEA:10704"/>
        <dbReference type="Rhea" id="RHEA-COMP:9672"/>
        <dbReference type="Rhea" id="RHEA-COMP:9708"/>
        <dbReference type="ChEBI" id="CHEBI:30616"/>
        <dbReference type="ChEBI" id="CHEBI:33019"/>
        <dbReference type="ChEBI" id="CHEBI:57762"/>
        <dbReference type="ChEBI" id="CHEBI:78442"/>
        <dbReference type="ChEBI" id="CHEBI:78537"/>
        <dbReference type="ChEBI" id="CHEBI:456215"/>
        <dbReference type="EC" id="6.1.1.9"/>
    </reaction>
</comment>
<comment type="subunit">
    <text evidence="1">Monomer.</text>
</comment>
<comment type="subcellular location">
    <subcellularLocation>
        <location evidence="1">Cytoplasm</location>
    </subcellularLocation>
</comment>
<comment type="domain">
    <text evidence="1">ValRS has two distinct active sites: one for aminoacylation and one for editing. The misactivated threonine is translocated from the active site to the editing site.</text>
</comment>
<comment type="domain">
    <text evidence="1">The C-terminal coiled-coil domain is crucial for aminoacylation activity.</text>
</comment>
<comment type="similarity">
    <text evidence="1">Belongs to the class-I aminoacyl-tRNA synthetase family. ValS type 1 subfamily.</text>
</comment>
<dbReference type="EC" id="6.1.1.9" evidence="1"/>
<dbReference type="EMBL" id="AE001363">
    <property type="protein sequence ID" value="AAD18247.1"/>
    <property type="molecule type" value="Genomic_DNA"/>
</dbReference>
<dbReference type="EMBL" id="AE002161">
    <property type="protein sequence ID" value="AAF38490.1"/>
    <property type="molecule type" value="Genomic_DNA"/>
</dbReference>
<dbReference type="EMBL" id="BA000008">
    <property type="protein sequence ID" value="BAA98304.1"/>
    <property type="molecule type" value="Genomic_DNA"/>
</dbReference>
<dbReference type="EMBL" id="AE009440">
    <property type="protein sequence ID" value="AAP98027.1"/>
    <property type="molecule type" value="Genomic_DNA"/>
</dbReference>
<dbReference type="PIR" id="B72120">
    <property type="entry name" value="B72120"/>
</dbReference>
<dbReference type="PIR" id="F86502">
    <property type="entry name" value="F86502"/>
</dbReference>
<dbReference type="RefSeq" id="NP_224302.1">
    <property type="nucleotide sequence ID" value="NC_000922.1"/>
</dbReference>
<dbReference type="RefSeq" id="WP_010882744.1">
    <property type="nucleotide sequence ID" value="NZ_LN847257.1"/>
</dbReference>
<dbReference type="SMR" id="Q9Z987"/>
<dbReference type="STRING" id="406984.CPK_ORF00604"/>
<dbReference type="GeneID" id="45050139"/>
<dbReference type="KEGG" id="cpa:CP_0680"/>
<dbReference type="KEGG" id="cpj:valS"/>
<dbReference type="KEGG" id="cpn:CPn_0094"/>
<dbReference type="KEGG" id="cpt:CpB0094"/>
<dbReference type="PATRIC" id="fig|115713.3.peg.107"/>
<dbReference type="eggNOG" id="COG0525">
    <property type="taxonomic scope" value="Bacteria"/>
</dbReference>
<dbReference type="HOGENOM" id="CLU_001493_0_2_0"/>
<dbReference type="OrthoDB" id="9810365at2"/>
<dbReference type="Proteomes" id="UP000000583">
    <property type="component" value="Chromosome"/>
</dbReference>
<dbReference type="Proteomes" id="UP000000801">
    <property type="component" value="Chromosome"/>
</dbReference>
<dbReference type="GO" id="GO:0005829">
    <property type="term" value="C:cytosol"/>
    <property type="evidence" value="ECO:0007669"/>
    <property type="project" value="TreeGrafter"/>
</dbReference>
<dbReference type="GO" id="GO:0002161">
    <property type="term" value="F:aminoacyl-tRNA deacylase activity"/>
    <property type="evidence" value="ECO:0007669"/>
    <property type="project" value="InterPro"/>
</dbReference>
<dbReference type="GO" id="GO:0005524">
    <property type="term" value="F:ATP binding"/>
    <property type="evidence" value="ECO:0007669"/>
    <property type="project" value="UniProtKB-UniRule"/>
</dbReference>
<dbReference type="GO" id="GO:0004832">
    <property type="term" value="F:valine-tRNA ligase activity"/>
    <property type="evidence" value="ECO:0007669"/>
    <property type="project" value="UniProtKB-UniRule"/>
</dbReference>
<dbReference type="GO" id="GO:0006438">
    <property type="term" value="P:valyl-tRNA aminoacylation"/>
    <property type="evidence" value="ECO:0007669"/>
    <property type="project" value="UniProtKB-UniRule"/>
</dbReference>
<dbReference type="CDD" id="cd07962">
    <property type="entry name" value="Anticodon_Ia_Val"/>
    <property type="match status" value="1"/>
</dbReference>
<dbReference type="CDD" id="cd00817">
    <property type="entry name" value="ValRS_core"/>
    <property type="match status" value="1"/>
</dbReference>
<dbReference type="FunFam" id="3.40.50.620:FF:000032">
    <property type="entry name" value="Valine--tRNA ligase"/>
    <property type="match status" value="1"/>
</dbReference>
<dbReference type="FunFam" id="3.40.50.620:FF:000306">
    <property type="entry name" value="Valine--tRNA ligase"/>
    <property type="match status" value="1"/>
</dbReference>
<dbReference type="Gene3D" id="3.40.50.620">
    <property type="entry name" value="HUPs"/>
    <property type="match status" value="2"/>
</dbReference>
<dbReference type="Gene3D" id="1.10.730.10">
    <property type="entry name" value="Isoleucyl-tRNA Synthetase, Domain 1"/>
    <property type="match status" value="1"/>
</dbReference>
<dbReference type="Gene3D" id="1.10.287.380">
    <property type="entry name" value="Valyl-tRNA synthetase, C-terminal domain"/>
    <property type="match status" value="1"/>
</dbReference>
<dbReference type="HAMAP" id="MF_02004">
    <property type="entry name" value="Val_tRNA_synth_type1"/>
    <property type="match status" value="1"/>
</dbReference>
<dbReference type="InterPro" id="IPR001412">
    <property type="entry name" value="aa-tRNA-synth_I_CS"/>
</dbReference>
<dbReference type="InterPro" id="IPR002300">
    <property type="entry name" value="aa-tRNA-synth_Ia"/>
</dbReference>
<dbReference type="InterPro" id="IPR033705">
    <property type="entry name" value="Anticodon_Ia_Val"/>
</dbReference>
<dbReference type="InterPro" id="IPR013155">
    <property type="entry name" value="M/V/L/I-tRNA-synth_anticd-bd"/>
</dbReference>
<dbReference type="InterPro" id="IPR014729">
    <property type="entry name" value="Rossmann-like_a/b/a_fold"/>
</dbReference>
<dbReference type="InterPro" id="IPR010978">
    <property type="entry name" value="tRNA-bd_arm"/>
</dbReference>
<dbReference type="InterPro" id="IPR009080">
    <property type="entry name" value="tRNAsynth_Ia_anticodon-bd"/>
</dbReference>
<dbReference type="InterPro" id="IPR037118">
    <property type="entry name" value="Val-tRNA_synth_C_sf"/>
</dbReference>
<dbReference type="InterPro" id="IPR009008">
    <property type="entry name" value="Val/Leu/Ile-tRNA-synth_edit"/>
</dbReference>
<dbReference type="InterPro" id="IPR002303">
    <property type="entry name" value="Valyl-tRNA_ligase"/>
</dbReference>
<dbReference type="NCBIfam" id="NF004349">
    <property type="entry name" value="PRK05729.1"/>
    <property type="match status" value="1"/>
</dbReference>
<dbReference type="NCBIfam" id="TIGR00422">
    <property type="entry name" value="valS"/>
    <property type="match status" value="1"/>
</dbReference>
<dbReference type="PANTHER" id="PTHR11946:SF93">
    <property type="entry name" value="VALINE--TRNA LIGASE, CHLOROPLASTIC_MITOCHONDRIAL 2"/>
    <property type="match status" value="1"/>
</dbReference>
<dbReference type="PANTHER" id="PTHR11946">
    <property type="entry name" value="VALYL-TRNA SYNTHETASES"/>
    <property type="match status" value="1"/>
</dbReference>
<dbReference type="Pfam" id="PF08264">
    <property type="entry name" value="Anticodon_1"/>
    <property type="match status" value="1"/>
</dbReference>
<dbReference type="Pfam" id="PF00133">
    <property type="entry name" value="tRNA-synt_1"/>
    <property type="match status" value="2"/>
</dbReference>
<dbReference type="PRINTS" id="PR00986">
    <property type="entry name" value="TRNASYNTHVAL"/>
</dbReference>
<dbReference type="SUPFAM" id="SSF47323">
    <property type="entry name" value="Anticodon-binding domain of a subclass of class I aminoacyl-tRNA synthetases"/>
    <property type="match status" value="1"/>
</dbReference>
<dbReference type="SUPFAM" id="SSF52374">
    <property type="entry name" value="Nucleotidylyl transferase"/>
    <property type="match status" value="1"/>
</dbReference>
<dbReference type="SUPFAM" id="SSF46589">
    <property type="entry name" value="tRNA-binding arm"/>
    <property type="match status" value="1"/>
</dbReference>
<dbReference type="SUPFAM" id="SSF50677">
    <property type="entry name" value="ValRS/IleRS/LeuRS editing domain"/>
    <property type="match status" value="1"/>
</dbReference>
<dbReference type="PROSITE" id="PS00178">
    <property type="entry name" value="AA_TRNA_LIGASE_I"/>
    <property type="match status" value="1"/>
</dbReference>
<gene>
    <name evidence="1" type="primary">valS</name>
    <name type="ordered locus">CPn_0094</name>
    <name type="ordered locus">CP_0680</name>
    <name type="ordered locus">CpB0094</name>
</gene>
<organism>
    <name type="scientific">Chlamydia pneumoniae</name>
    <name type="common">Chlamydophila pneumoniae</name>
    <dbReference type="NCBI Taxonomy" id="83558"/>
    <lineage>
        <taxon>Bacteria</taxon>
        <taxon>Pseudomonadati</taxon>
        <taxon>Chlamydiota</taxon>
        <taxon>Chlamydiia</taxon>
        <taxon>Chlamydiales</taxon>
        <taxon>Chlamydiaceae</taxon>
        <taxon>Chlamydia/Chlamydophila group</taxon>
        <taxon>Chlamydia</taxon>
    </lineage>
</organism>